<dbReference type="EMBL" id="X03852">
    <property type="protein sequence ID" value="CAA27482.1"/>
    <property type="molecule type" value="Genomic_DNA"/>
</dbReference>
<dbReference type="PIR" id="B24467">
    <property type="entry name" value="B24467"/>
</dbReference>
<dbReference type="RefSeq" id="YP_003587526.1">
    <property type="nucleotide sequence ID" value="NC_014057.1"/>
</dbReference>
<dbReference type="SMR" id="P05039"/>
<dbReference type="GeneID" id="9073051"/>
<dbReference type="OrthoDB" id="149879at2759"/>
<dbReference type="GO" id="GO:0009535">
    <property type="term" value="C:chloroplast thylakoid membrane"/>
    <property type="evidence" value="ECO:0007669"/>
    <property type="project" value="UniProtKB-SubCell"/>
</dbReference>
<dbReference type="GO" id="GO:0045259">
    <property type="term" value="C:proton-transporting ATP synthase complex"/>
    <property type="evidence" value="ECO:0007669"/>
    <property type="project" value="UniProtKB-KW"/>
</dbReference>
<dbReference type="GO" id="GO:0005524">
    <property type="term" value="F:ATP binding"/>
    <property type="evidence" value="ECO:0007669"/>
    <property type="project" value="UniProtKB-UniRule"/>
</dbReference>
<dbReference type="GO" id="GO:0046933">
    <property type="term" value="F:proton-transporting ATP synthase activity, rotational mechanism"/>
    <property type="evidence" value="ECO:0007669"/>
    <property type="project" value="UniProtKB-UniRule"/>
</dbReference>
<dbReference type="CDD" id="cd12152">
    <property type="entry name" value="F1-ATPase_delta"/>
    <property type="match status" value="1"/>
</dbReference>
<dbReference type="FunFam" id="2.60.15.10:FF:000002">
    <property type="entry name" value="ATP synthase epsilon chain, chloroplastic"/>
    <property type="match status" value="1"/>
</dbReference>
<dbReference type="Gene3D" id="6.10.140.480">
    <property type="match status" value="1"/>
</dbReference>
<dbReference type="Gene3D" id="2.60.15.10">
    <property type="entry name" value="F0F1 ATP synthase delta/epsilon subunit, N-terminal"/>
    <property type="match status" value="1"/>
</dbReference>
<dbReference type="HAMAP" id="MF_00530">
    <property type="entry name" value="ATP_synth_epsil_bac"/>
    <property type="match status" value="1"/>
</dbReference>
<dbReference type="InterPro" id="IPR001469">
    <property type="entry name" value="ATP_synth_F1_dsu/esu"/>
</dbReference>
<dbReference type="InterPro" id="IPR020546">
    <property type="entry name" value="ATP_synth_F1_dsu/esu_N"/>
</dbReference>
<dbReference type="InterPro" id="IPR020547">
    <property type="entry name" value="ATP_synth_F1_esu_C"/>
</dbReference>
<dbReference type="InterPro" id="IPR036771">
    <property type="entry name" value="ATPsynth_dsu/esu_N"/>
</dbReference>
<dbReference type="NCBIfam" id="TIGR01216">
    <property type="entry name" value="ATP_synt_epsi"/>
    <property type="match status" value="1"/>
</dbReference>
<dbReference type="PANTHER" id="PTHR13822">
    <property type="entry name" value="ATP SYNTHASE DELTA/EPSILON CHAIN"/>
    <property type="match status" value="1"/>
</dbReference>
<dbReference type="PANTHER" id="PTHR13822:SF10">
    <property type="entry name" value="ATP SYNTHASE EPSILON CHAIN, CHLOROPLASTIC"/>
    <property type="match status" value="1"/>
</dbReference>
<dbReference type="Pfam" id="PF00401">
    <property type="entry name" value="ATP-synt_DE"/>
    <property type="match status" value="1"/>
</dbReference>
<dbReference type="Pfam" id="PF02823">
    <property type="entry name" value="ATP-synt_DE_N"/>
    <property type="match status" value="1"/>
</dbReference>
<dbReference type="SUPFAM" id="SSF51344">
    <property type="entry name" value="Epsilon subunit of F1F0-ATP synthase N-terminal domain"/>
    <property type="match status" value="1"/>
</dbReference>
<geneLocation type="chloroplast"/>
<comment type="function">
    <text evidence="1">Produces ATP from ADP in the presence of a proton gradient across the membrane.</text>
</comment>
<comment type="subunit">
    <text evidence="1">F-type ATPases have 2 components, CF(1) - the catalytic core - and CF(0) - the membrane proton channel. CF(1) has five subunits: alpha(3), beta(3), gamma(1), delta(1), epsilon(1). CF(0) has three main subunits: a, b and c.</text>
</comment>
<comment type="subcellular location">
    <subcellularLocation>
        <location evidence="1">Plastid</location>
        <location evidence="1">Chloroplast thylakoid membrane</location>
        <topology evidence="1">Peripheral membrane protein</topology>
    </subcellularLocation>
</comment>
<comment type="similarity">
    <text evidence="1">Belongs to the ATPase epsilon chain family.</text>
</comment>
<name>ATPE_PEA</name>
<protein>
    <recommendedName>
        <fullName evidence="1">ATP synthase epsilon chain, chloroplastic</fullName>
    </recommendedName>
    <alternativeName>
        <fullName evidence="1">ATP synthase F1 sector epsilon subunit</fullName>
    </alternativeName>
    <alternativeName>
        <fullName evidence="1">F-ATPase epsilon subunit</fullName>
    </alternativeName>
</protein>
<feature type="chain" id="PRO_0000188283" description="ATP synthase epsilon chain, chloroplastic">
    <location>
        <begin position="1"/>
        <end position="137"/>
    </location>
</feature>
<reference key="1">
    <citation type="journal article" date="1986" name="Nucleic Acids Res.">
        <title>Sequence of the genes for the beta and epsilon subunits of ATP synthase from pea chloroplasts.</title>
        <authorList>
            <person name="Zurawski G."/>
            <person name="Bottomley W."/>
            <person name="Whitfeld P.R."/>
        </authorList>
    </citation>
    <scope>NUCLEOTIDE SEQUENCE [GENOMIC DNA]</scope>
</reference>
<gene>
    <name evidence="1" type="primary">atpE</name>
</gene>
<organism>
    <name type="scientific">Pisum sativum</name>
    <name type="common">Garden pea</name>
    <name type="synonym">Lathyrus oleraceus</name>
    <dbReference type="NCBI Taxonomy" id="3888"/>
    <lineage>
        <taxon>Eukaryota</taxon>
        <taxon>Viridiplantae</taxon>
        <taxon>Streptophyta</taxon>
        <taxon>Embryophyta</taxon>
        <taxon>Tracheophyta</taxon>
        <taxon>Spermatophyta</taxon>
        <taxon>Magnoliopsida</taxon>
        <taxon>eudicotyledons</taxon>
        <taxon>Gunneridae</taxon>
        <taxon>Pentapetalae</taxon>
        <taxon>rosids</taxon>
        <taxon>fabids</taxon>
        <taxon>Fabales</taxon>
        <taxon>Fabaceae</taxon>
        <taxon>Papilionoideae</taxon>
        <taxon>50 kb inversion clade</taxon>
        <taxon>NPAAA clade</taxon>
        <taxon>Hologalegina</taxon>
        <taxon>IRL clade</taxon>
        <taxon>Fabeae</taxon>
        <taxon>Pisum</taxon>
    </lineage>
</organism>
<accession>P05039</accession>
<proteinExistence type="inferred from homology"/>
<sequence>MTFNLCVLTPNRIVWDSEVKEIILSTNSGQIGVLQNHAPIATALDIGILRIRLKDRWLTMALMGGFARIGNNEITILVTDAESASDINPQEAQQTLQIAEANLNKAEGKRETIEANLSLRRAKTRVEAIVETIKRIS</sequence>
<keyword id="KW-0066">ATP synthesis</keyword>
<keyword id="KW-0139">CF(1)</keyword>
<keyword id="KW-0150">Chloroplast</keyword>
<keyword id="KW-0375">Hydrogen ion transport</keyword>
<keyword id="KW-0406">Ion transport</keyword>
<keyword id="KW-0472">Membrane</keyword>
<keyword id="KW-0934">Plastid</keyword>
<keyword id="KW-0793">Thylakoid</keyword>
<keyword id="KW-0813">Transport</keyword>
<evidence type="ECO:0000255" key="1">
    <source>
        <dbReference type="HAMAP-Rule" id="MF_00530"/>
    </source>
</evidence>